<feature type="chain" id="PRO_1000082805" description="Ribosomal RNA large subunit methyltransferase H">
    <location>
        <begin position="1"/>
        <end position="157"/>
    </location>
</feature>
<feature type="binding site" evidence="1">
    <location>
        <position position="73"/>
    </location>
    <ligand>
        <name>S-adenosyl-L-methionine</name>
        <dbReference type="ChEBI" id="CHEBI:59789"/>
    </ligand>
</feature>
<feature type="binding site" evidence="1">
    <location>
        <position position="105"/>
    </location>
    <ligand>
        <name>S-adenosyl-L-methionine</name>
        <dbReference type="ChEBI" id="CHEBI:59789"/>
    </ligand>
</feature>
<feature type="binding site" evidence="1">
    <location>
        <begin position="124"/>
        <end position="129"/>
    </location>
    <ligand>
        <name>S-adenosyl-L-methionine</name>
        <dbReference type="ChEBI" id="CHEBI:59789"/>
    </ligand>
</feature>
<proteinExistence type="inferred from homology"/>
<keyword id="KW-0963">Cytoplasm</keyword>
<keyword id="KW-0489">Methyltransferase</keyword>
<keyword id="KW-0698">rRNA processing</keyword>
<keyword id="KW-0949">S-adenosyl-L-methionine</keyword>
<keyword id="KW-0808">Transferase</keyword>
<evidence type="ECO:0000255" key="1">
    <source>
        <dbReference type="HAMAP-Rule" id="MF_00658"/>
    </source>
</evidence>
<comment type="function">
    <text evidence="1">Specifically methylates the pseudouridine at position 1915 (m3Psi1915) in 23S rRNA.</text>
</comment>
<comment type="catalytic activity">
    <reaction evidence="1">
        <text>pseudouridine(1915) in 23S rRNA + S-adenosyl-L-methionine = N(3)-methylpseudouridine(1915) in 23S rRNA + S-adenosyl-L-homocysteine + H(+)</text>
        <dbReference type="Rhea" id="RHEA:42752"/>
        <dbReference type="Rhea" id="RHEA-COMP:10221"/>
        <dbReference type="Rhea" id="RHEA-COMP:10222"/>
        <dbReference type="ChEBI" id="CHEBI:15378"/>
        <dbReference type="ChEBI" id="CHEBI:57856"/>
        <dbReference type="ChEBI" id="CHEBI:59789"/>
        <dbReference type="ChEBI" id="CHEBI:65314"/>
        <dbReference type="ChEBI" id="CHEBI:74486"/>
        <dbReference type="EC" id="2.1.1.177"/>
    </reaction>
</comment>
<comment type="subunit">
    <text evidence="1">Homodimer.</text>
</comment>
<comment type="subcellular location">
    <subcellularLocation>
        <location evidence="1">Cytoplasm</location>
    </subcellularLocation>
</comment>
<comment type="similarity">
    <text evidence="1">Belongs to the RNA methyltransferase RlmH family.</text>
</comment>
<name>RLMH_FLAJ1</name>
<organism>
    <name type="scientific">Flavobacterium johnsoniae (strain ATCC 17061 / DSM 2064 / JCM 8514 / BCRC 14874 / CCUG 350202 / NBRC 14942 / NCIMB 11054 / UW101)</name>
    <name type="common">Cytophaga johnsonae</name>
    <dbReference type="NCBI Taxonomy" id="376686"/>
    <lineage>
        <taxon>Bacteria</taxon>
        <taxon>Pseudomonadati</taxon>
        <taxon>Bacteroidota</taxon>
        <taxon>Flavobacteriia</taxon>
        <taxon>Flavobacteriales</taxon>
        <taxon>Flavobacteriaceae</taxon>
        <taxon>Flavobacterium</taxon>
    </lineage>
</organism>
<reference key="1">
    <citation type="journal article" date="2009" name="Appl. Environ. Microbiol.">
        <title>Novel features of the polysaccharide-digesting gliding bacterium Flavobacterium johnsoniae as revealed by genome sequence analysis.</title>
        <authorList>
            <person name="McBride M.J."/>
            <person name="Xie G."/>
            <person name="Martens E.C."/>
            <person name="Lapidus A."/>
            <person name="Henrissat B."/>
            <person name="Rhodes R.G."/>
            <person name="Goltsman E."/>
            <person name="Wang W."/>
            <person name="Xu J."/>
            <person name="Hunnicutt D.W."/>
            <person name="Staroscik A.M."/>
            <person name="Hoover T.R."/>
            <person name="Cheng Y.Q."/>
            <person name="Stein J.L."/>
        </authorList>
    </citation>
    <scope>NUCLEOTIDE SEQUENCE [LARGE SCALE GENOMIC DNA]</scope>
    <source>
        <strain>ATCC 17061 / DSM 2064 / JCM 8514 / BCRC 14874 / CCUG 350202 / NBRC 14942 / NCIMB 11054 / UW101</strain>
    </source>
</reference>
<protein>
    <recommendedName>
        <fullName evidence="1">Ribosomal RNA large subunit methyltransferase H</fullName>
        <ecNumber evidence="1">2.1.1.177</ecNumber>
    </recommendedName>
    <alternativeName>
        <fullName evidence="1">23S rRNA (pseudouridine1915-N3)-methyltransferase</fullName>
    </alternativeName>
    <alternativeName>
        <fullName evidence="1">23S rRNA m3Psi1915 methyltransferase</fullName>
    </alternativeName>
    <alternativeName>
        <fullName evidence="1">rRNA (pseudouridine-N3-)-methyltransferase RlmH</fullName>
    </alternativeName>
</protein>
<sequence>MNIKLIAIGKTDNKSLQTLIDDYTKRLSFYIKFDLEIIPDIKNVKNLSESQQKEKEGELILSKLSATDQLILLDENGKTFSSVGFSEELQKKMNSGVKTLVFVIGGPYGFSETIYKKAQGKVSLSLMTFSHQMVRLFFIEQLYRGFTILRNEPYHHQ</sequence>
<gene>
    <name evidence="1" type="primary">rlmH</name>
    <name type="ordered locus">Fjoh_3495</name>
</gene>
<dbReference type="EC" id="2.1.1.177" evidence="1"/>
<dbReference type="EMBL" id="CP000685">
    <property type="protein sequence ID" value="ABQ06509.1"/>
    <property type="molecule type" value="Genomic_DNA"/>
</dbReference>
<dbReference type="RefSeq" id="WP_012025476.1">
    <property type="nucleotide sequence ID" value="NC_009441.1"/>
</dbReference>
<dbReference type="SMR" id="A5FE53"/>
<dbReference type="STRING" id="376686.Fjoh_3495"/>
<dbReference type="KEGG" id="fjo:Fjoh_3495"/>
<dbReference type="eggNOG" id="COG1576">
    <property type="taxonomic scope" value="Bacteria"/>
</dbReference>
<dbReference type="HOGENOM" id="CLU_100552_2_0_10"/>
<dbReference type="OrthoDB" id="9806643at2"/>
<dbReference type="Proteomes" id="UP000006694">
    <property type="component" value="Chromosome"/>
</dbReference>
<dbReference type="GO" id="GO:0005737">
    <property type="term" value="C:cytoplasm"/>
    <property type="evidence" value="ECO:0007669"/>
    <property type="project" value="UniProtKB-SubCell"/>
</dbReference>
<dbReference type="GO" id="GO:0070038">
    <property type="term" value="F:rRNA (pseudouridine-N3-)-methyltransferase activity"/>
    <property type="evidence" value="ECO:0007669"/>
    <property type="project" value="UniProtKB-UniRule"/>
</dbReference>
<dbReference type="CDD" id="cd18081">
    <property type="entry name" value="RlmH-like"/>
    <property type="match status" value="1"/>
</dbReference>
<dbReference type="Gene3D" id="3.40.1280.10">
    <property type="match status" value="1"/>
</dbReference>
<dbReference type="HAMAP" id="MF_00658">
    <property type="entry name" value="23SrRNA_methyltr_H"/>
    <property type="match status" value="1"/>
</dbReference>
<dbReference type="InterPro" id="IPR029028">
    <property type="entry name" value="Alpha/beta_knot_MTases"/>
</dbReference>
<dbReference type="InterPro" id="IPR003742">
    <property type="entry name" value="RlmH-like"/>
</dbReference>
<dbReference type="InterPro" id="IPR029026">
    <property type="entry name" value="tRNA_m1G_MTases_N"/>
</dbReference>
<dbReference type="NCBIfam" id="NF000990">
    <property type="entry name" value="PRK00103.2-4"/>
    <property type="match status" value="1"/>
</dbReference>
<dbReference type="PANTHER" id="PTHR33603">
    <property type="entry name" value="METHYLTRANSFERASE"/>
    <property type="match status" value="1"/>
</dbReference>
<dbReference type="PANTHER" id="PTHR33603:SF1">
    <property type="entry name" value="RIBOSOMAL RNA LARGE SUBUNIT METHYLTRANSFERASE H"/>
    <property type="match status" value="1"/>
</dbReference>
<dbReference type="Pfam" id="PF02590">
    <property type="entry name" value="SPOUT_MTase"/>
    <property type="match status" value="1"/>
</dbReference>
<dbReference type="PIRSF" id="PIRSF004505">
    <property type="entry name" value="MT_bac"/>
    <property type="match status" value="1"/>
</dbReference>
<dbReference type="SUPFAM" id="SSF75217">
    <property type="entry name" value="alpha/beta knot"/>
    <property type="match status" value="1"/>
</dbReference>
<accession>A5FE53</accession>